<keyword id="KW-0029">Amino-acid transport</keyword>
<keyword id="KW-0997">Cell inner membrane</keyword>
<keyword id="KW-1003">Cell membrane</keyword>
<keyword id="KW-0472">Membrane</keyword>
<keyword id="KW-0812">Transmembrane</keyword>
<keyword id="KW-1133">Transmembrane helix</keyword>
<keyword id="KW-0813">Transport</keyword>
<reference key="1">
    <citation type="journal article" date="2005" name="Nucleic Acids Res.">
        <title>The genome sequence of Salmonella enterica serovar Choleraesuis, a highly invasive and resistant zoonotic pathogen.</title>
        <authorList>
            <person name="Chiu C.-H."/>
            <person name="Tang P."/>
            <person name="Chu C."/>
            <person name="Hu S."/>
            <person name="Bao Q."/>
            <person name="Yu J."/>
            <person name="Chou Y.-Y."/>
            <person name="Wang H.-S."/>
            <person name="Lee Y.-S."/>
        </authorList>
    </citation>
    <scope>NUCLEOTIDE SEQUENCE [LARGE SCALE GENOMIC DNA]</scope>
    <source>
        <strain>SC-B67</strain>
    </source>
</reference>
<proteinExistence type="inferred from homology"/>
<dbReference type="EMBL" id="AE017220">
    <property type="protein sequence ID" value="AAX66914.1"/>
    <property type="molecule type" value="Genomic_DNA"/>
</dbReference>
<dbReference type="RefSeq" id="WP_001540865.1">
    <property type="nucleotide sequence ID" value="NC_006905.1"/>
</dbReference>
<dbReference type="KEGG" id="sec:SCH_3008"/>
<dbReference type="HOGENOM" id="CLU_087840_0_1_6"/>
<dbReference type="Proteomes" id="UP000000538">
    <property type="component" value="Chromosome"/>
</dbReference>
<dbReference type="GO" id="GO:0005886">
    <property type="term" value="C:plasma membrane"/>
    <property type="evidence" value="ECO:0007669"/>
    <property type="project" value="UniProtKB-SubCell"/>
</dbReference>
<dbReference type="GO" id="GO:0061459">
    <property type="term" value="F:L-arginine transmembrane transporter activity"/>
    <property type="evidence" value="ECO:0007669"/>
    <property type="project" value="UniProtKB-UniRule"/>
</dbReference>
<dbReference type="HAMAP" id="MF_01901">
    <property type="entry name" value="ArgO"/>
    <property type="match status" value="1"/>
</dbReference>
<dbReference type="InterPro" id="IPR023445">
    <property type="entry name" value="Arg_export_ArgO_enterobac"/>
</dbReference>
<dbReference type="InterPro" id="IPR001123">
    <property type="entry name" value="LeuE-type"/>
</dbReference>
<dbReference type="InterPro" id="IPR004777">
    <property type="entry name" value="Lys/arg_exporter"/>
</dbReference>
<dbReference type="NCBIfam" id="TIGR00948">
    <property type="entry name" value="2a75"/>
    <property type="match status" value="1"/>
</dbReference>
<dbReference type="NCBIfam" id="NF006801">
    <property type="entry name" value="PRK09304.1"/>
    <property type="match status" value="1"/>
</dbReference>
<dbReference type="PANTHER" id="PTHR30086">
    <property type="entry name" value="ARGININE EXPORTER PROTEIN ARGO"/>
    <property type="match status" value="1"/>
</dbReference>
<dbReference type="PANTHER" id="PTHR30086:SF20">
    <property type="entry name" value="ARGININE EXPORTER PROTEIN ARGO-RELATED"/>
    <property type="match status" value="1"/>
</dbReference>
<dbReference type="Pfam" id="PF01810">
    <property type="entry name" value="LysE"/>
    <property type="match status" value="1"/>
</dbReference>
<feature type="chain" id="PRO_0000204163" description="Arginine exporter protein ArgO">
    <location>
        <begin position="1"/>
        <end position="211"/>
    </location>
</feature>
<feature type="transmembrane region" description="Helical" evidence="1">
    <location>
        <begin position="1"/>
        <end position="21"/>
    </location>
</feature>
<feature type="transmembrane region" description="Helical" evidence="1">
    <location>
        <begin position="37"/>
        <end position="57"/>
    </location>
</feature>
<feature type="transmembrane region" description="Helical" evidence="1">
    <location>
        <begin position="68"/>
        <end position="88"/>
    </location>
</feature>
<feature type="transmembrane region" description="Helical" evidence="1">
    <location>
        <begin position="111"/>
        <end position="131"/>
    </location>
</feature>
<feature type="transmembrane region" description="Helical" evidence="1">
    <location>
        <begin position="147"/>
        <end position="167"/>
    </location>
</feature>
<feature type="transmembrane region" description="Helical" evidence="1">
    <location>
        <begin position="179"/>
        <end position="199"/>
    </location>
</feature>
<gene>
    <name evidence="1" type="primary">argO</name>
    <name type="ordered locus">SCH_3008</name>
</gene>
<sequence>MISYYFQGFALGAAMILPLGPQNAFVMNQGIRRQYHLMIALLCALSDLVLISAGIFGGSALLMQSPWLLALVTWGGVAFLLWYGFGALKTAMSSNLELASAEVMKQGRWKIIATMLAVTWLNPHVYLDTFVVLGSLGGQLAMEPKRWFALGTISASFLWFFGLALLAAWLAPRLRTVKAQRIINILVGVVMWLIAFQLAREGVAHMQALFN</sequence>
<accession>Q57K48</accession>
<organism>
    <name type="scientific">Salmonella choleraesuis (strain SC-B67)</name>
    <dbReference type="NCBI Taxonomy" id="321314"/>
    <lineage>
        <taxon>Bacteria</taxon>
        <taxon>Pseudomonadati</taxon>
        <taxon>Pseudomonadota</taxon>
        <taxon>Gammaproteobacteria</taxon>
        <taxon>Enterobacterales</taxon>
        <taxon>Enterobacteriaceae</taxon>
        <taxon>Salmonella</taxon>
    </lineage>
</organism>
<evidence type="ECO:0000255" key="1">
    <source>
        <dbReference type="HAMAP-Rule" id="MF_01901"/>
    </source>
</evidence>
<name>ARGO_SALCH</name>
<comment type="function">
    <text evidence="1">Involved in the export of arginine. Important to control the intracellular level of arginine and the correct balance between arginine and lysine.</text>
</comment>
<comment type="catalytic activity">
    <reaction evidence="1">
        <text>L-arginine(in) = L-arginine(out)</text>
        <dbReference type="Rhea" id="RHEA:32143"/>
        <dbReference type="ChEBI" id="CHEBI:32682"/>
    </reaction>
    <physiologicalReaction direction="left-to-right" evidence="1">
        <dbReference type="Rhea" id="RHEA:32144"/>
    </physiologicalReaction>
</comment>
<comment type="subcellular location">
    <subcellularLocation>
        <location evidence="1">Cell inner membrane</location>
        <topology evidence="1">Multi-pass membrane protein</topology>
    </subcellularLocation>
</comment>
<comment type="similarity">
    <text evidence="1">Belongs to the LysE/ArgO transporter (TC 2.A.75) family.</text>
</comment>
<protein>
    <recommendedName>
        <fullName evidence="1">Arginine exporter protein ArgO</fullName>
    </recommendedName>
</protein>